<dbReference type="EMBL" id="U43592">
    <property type="protein sequence ID" value="AAG10089.1"/>
    <property type="status" value="ALT_INIT"/>
    <property type="molecule type" value="mRNA"/>
</dbReference>
<dbReference type="EMBL" id="AB013392">
    <property type="protein sequence ID" value="BAB09877.1"/>
    <property type="status" value="ALT_INIT"/>
    <property type="molecule type" value="Genomic_DNA"/>
</dbReference>
<dbReference type="EMBL" id="CP002688">
    <property type="protein sequence ID" value="AED96785.2"/>
    <property type="status" value="ALT_INIT"/>
    <property type="molecule type" value="Genomic_DNA"/>
</dbReference>
<dbReference type="EMBL" id="CP002688">
    <property type="protein sequence ID" value="AED96786.2"/>
    <property type="status" value="ALT_INIT"/>
    <property type="molecule type" value="Genomic_DNA"/>
</dbReference>
<dbReference type="EMBL" id="AY034989">
    <property type="protein sequence ID" value="AAK59494.2"/>
    <property type="molecule type" value="mRNA"/>
</dbReference>
<dbReference type="EMBL" id="BT000885">
    <property type="protein sequence ID" value="AAN41285.1"/>
    <property type="molecule type" value="mRNA"/>
</dbReference>
<dbReference type="EMBL" id="AK318954">
    <property type="protein sequence ID" value="BAH57069.1"/>
    <property type="status" value="ALT_INIT"/>
    <property type="molecule type" value="mRNA"/>
</dbReference>
<dbReference type="EMBL" id="AY084285">
    <property type="protein sequence ID" value="AAM60876.1"/>
    <property type="status" value="ALT_INIT"/>
    <property type="molecule type" value="mRNA"/>
</dbReference>
<dbReference type="RefSeq" id="NP_001119446.2">
    <property type="nucleotide sequence ID" value="NM_001125974.2"/>
</dbReference>
<dbReference type="RefSeq" id="NP_200471.3">
    <property type="nucleotide sequence ID" value="NM_125043.4"/>
</dbReference>
<dbReference type="PDB" id="6IQF">
    <property type="method" value="X-ray"/>
    <property type="resolution" value="1.46 A"/>
    <property type="chains" value="A=1-131"/>
</dbReference>
<dbReference type="PDB" id="6IQK">
    <property type="method" value="X-ray"/>
    <property type="resolution" value="3.60 A"/>
    <property type="chains" value="A/B/C/D/E/F/G/H/I/J=1-131"/>
</dbReference>
<dbReference type="PDBsum" id="6IQF"/>
<dbReference type="PDBsum" id="6IQK"/>
<dbReference type="SMR" id="Q9FE63"/>
<dbReference type="BioGRID" id="21005">
    <property type="interactions" value="5"/>
</dbReference>
<dbReference type="FunCoup" id="Q9FE63">
    <property type="interactions" value="590"/>
</dbReference>
<dbReference type="IntAct" id="Q9FE63">
    <property type="interactions" value="3"/>
</dbReference>
<dbReference type="STRING" id="3702.Q9FE63"/>
<dbReference type="PaxDb" id="3702-AT5G56600.1"/>
<dbReference type="ProteomicsDB" id="226505">
    <molecule id="Q9FE63-1"/>
</dbReference>
<dbReference type="GeneID" id="835761"/>
<dbReference type="KEGG" id="ath:AT5G56600"/>
<dbReference type="Araport" id="AT5G56600"/>
<dbReference type="TAIR" id="AT5G56600"/>
<dbReference type="eggNOG" id="KOG1755">
    <property type="taxonomic scope" value="Eukaryota"/>
</dbReference>
<dbReference type="HOGENOM" id="CLU_120772_0_0_1"/>
<dbReference type="InParanoid" id="Q9FE63"/>
<dbReference type="PhylomeDB" id="Q9FE63"/>
<dbReference type="PRO" id="PR:Q9FE63"/>
<dbReference type="Proteomes" id="UP000006548">
    <property type="component" value="Chromosome 5"/>
</dbReference>
<dbReference type="ExpressionAtlas" id="Q9FE63">
    <property type="expression patterns" value="baseline and differential"/>
</dbReference>
<dbReference type="GO" id="GO:0005938">
    <property type="term" value="C:cell cortex"/>
    <property type="evidence" value="ECO:0000318"/>
    <property type="project" value="GO_Central"/>
</dbReference>
<dbReference type="GO" id="GO:0005856">
    <property type="term" value="C:cytoskeleton"/>
    <property type="evidence" value="ECO:0007669"/>
    <property type="project" value="UniProtKB-SubCell"/>
</dbReference>
<dbReference type="GO" id="GO:0003785">
    <property type="term" value="F:actin monomer binding"/>
    <property type="evidence" value="ECO:0000318"/>
    <property type="project" value="GO_Central"/>
</dbReference>
<dbReference type="GO" id="GO:0006952">
    <property type="term" value="P:defense response"/>
    <property type="evidence" value="ECO:0007669"/>
    <property type="project" value="UniProtKB-KW"/>
</dbReference>
<dbReference type="CDD" id="cd00148">
    <property type="entry name" value="PROF"/>
    <property type="match status" value="1"/>
</dbReference>
<dbReference type="FunFam" id="3.30.450.30:FF:000001">
    <property type="entry name" value="Profilin"/>
    <property type="match status" value="1"/>
</dbReference>
<dbReference type="Gene3D" id="3.30.450.30">
    <property type="entry name" value="Dynein light chain 2a, cytoplasmic"/>
    <property type="match status" value="1"/>
</dbReference>
<dbReference type="InterPro" id="IPR048278">
    <property type="entry name" value="PFN"/>
</dbReference>
<dbReference type="InterPro" id="IPR005455">
    <property type="entry name" value="PFN_euk"/>
</dbReference>
<dbReference type="InterPro" id="IPR036140">
    <property type="entry name" value="PFN_sf"/>
</dbReference>
<dbReference type="PANTHER" id="PTHR11604">
    <property type="entry name" value="PROFILIN"/>
    <property type="match status" value="1"/>
</dbReference>
<dbReference type="PANTHER" id="PTHR11604:SF35">
    <property type="entry name" value="PROFILIN-3"/>
    <property type="match status" value="1"/>
</dbReference>
<dbReference type="Pfam" id="PF00235">
    <property type="entry name" value="Profilin"/>
    <property type="match status" value="1"/>
</dbReference>
<dbReference type="PRINTS" id="PR00392">
    <property type="entry name" value="PROFILIN"/>
</dbReference>
<dbReference type="PRINTS" id="PR01640">
    <property type="entry name" value="PROFILINPLNT"/>
</dbReference>
<dbReference type="SMART" id="SM00392">
    <property type="entry name" value="PROF"/>
    <property type="match status" value="1"/>
</dbReference>
<dbReference type="SUPFAM" id="SSF55770">
    <property type="entry name" value="Profilin (actin-binding protein)"/>
    <property type="match status" value="1"/>
</dbReference>
<dbReference type="PROSITE" id="PS00414">
    <property type="entry name" value="PROFILIN"/>
    <property type="match status" value="1"/>
</dbReference>
<proteinExistence type="evidence at protein level"/>
<accession>Q9FE63</accession>
<accession>B3H795</accession>
<accession>C0Z2Z0</accession>
<accession>Q8H123</accession>
<accession>Q8H2C7</accession>
<protein>
    <recommendedName>
        <fullName evidence="9">Profilin-3</fullName>
    </recommendedName>
    <alternativeName>
        <fullName evidence="8">AtPRF3</fullName>
    </alternativeName>
    <alternativeName>
        <fullName evidence="9">AthPRF3</fullName>
    </alternativeName>
</protein>
<name>PRF3_ARATH</name>
<gene>
    <name evidence="7" type="primary">PRF3</name>
    <name evidence="10" type="synonym">PRO5</name>
    <name evidence="12" type="ordered locus">At5g56600</name>
    <name evidence="13" type="ORF">MIK19.4</name>
</gene>
<keyword id="KW-0002">3D-structure</keyword>
<keyword id="KW-0009">Actin-binding</keyword>
<keyword id="KW-0025">Alternative splicing</keyword>
<keyword id="KW-0963">Cytoplasm</keyword>
<keyword id="KW-0206">Cytoskeleton</keyword>
<keyword id="KW-0611">Plant defense</keyword>
<keyword id="KW-1185">Reference proteome</keyword>
<sequence>MPLPHTHSLVVSTLSLEHSDKPQRRSRAKVKKKKKTNMSWQTYVDDHLMCDVAGNRLTAAAILGQDGSVWAQSNNFPQVKPEEIQGIKDDFTTPGTLAPTGLFLGGNKYMVIQGEPNAVIRGKKGAGGVTIKKTTLALVFGIYDEPMTPGQCNMVVENLGEYLIESGL</sequence>
<organism>
    <name type="scientific">Arabidopsis thaliana</name>
    <name type="common">Mouse-ear cress</name>
    <dbReference type="NCBI Taxonomy" id="3702"/>
    <lineage>
        <taxon>Eukaryota</taxon>
        <taxon>Viridiplantae</taxon>
        <taxon>Streptophyta</taxon>
        <taxon>Embryophyta</taxon>
        <taxon>Tracheophyta</taxon>
        <taxon>Spermatophyta</taxon>
        <taxon>Magnoliopsida</taxon>
        <taxon>eudicotyledons</taxon>
        <taxon>Gunneridae</taxon>
        <taxon>Pentapetalae</taxon>
        <taxon>rosids</taxon>
        <taxon>malvids</taxon>
        <taxon>Brassicales</taxon>
        <taxon>Brassicaceae</taxon>
        <taxon>Camelineae</taxon>
        <taxon>Arabidopsis</taxon>
    </lineage>
</organism>
<comment type="function">
    <text evidence="2 3 5 11">Binds to actin monomers and regulates the organization of the actin cytoskeleton (PubMed:23052593, PubMed:29861135). Can increase the critical concentration (Cc) of actin assembly in vitro (PubMed:23052593). Acts as a downstream effector of the hydrogen sulfide signaling to regulate the assembly and depolymerization of F-actin (PubMed:25652660). At high concentrations, profilin prevents the polymerization of actin, whereas it enhances it at low concentrations (Probable). Binding to the poly-proline motif of formin induces oligomerization of PRF3 (PubMed:29861135). PRF3 oligomers inhibit formin-mediated actin assembly to modulate plant immunity triggered by pathogen-associated molecular patterns (PAMPs) (PubMed:29861135).</text>
</comment>
<comment type="subunit">
    <text evidence="5 10">Occurs in many kinds of cells as a complex with monomeric actin in a 1:1 ratio (Probable). Binding to the poly-proline motif of formins induces formation of oligomers through the N-terminal hydrophobic residues of PRF3 (PubMed:29861135).</text>
</comment>
<comment type="subcellular location">
    <subcellularLocation>
        <location evidence="10">Cytoplasm</location>
        <location evidence="10">Cytoskeleton</location>
    </subcellularLocation>
</comment>
<comment type="alternative products">
    <event type="alternative splicing"/>
    <isoform>
        <id>Q9FE63-1</id>
        <name>1</name>
        <sequence type="displayed"/>
    </isoform>
    <isoform>
        <id>Q9FE63-2</id>
        <name>2</name>
        <sequence type="described" ref="VSP_042421"/>
    </isoform>
</comment>
<comment type="tissue specificity">
    <text evidence="2">Expressed in roots, rosette leaves, cauline leaves, stems and flowers.</text>
</comment>
<comment type="induction">
    <text evidence="3 5">Induced by hydrogen sulfide (PubMed:25652660). Down-regulated by treatment with the flagellin peptide flg22 elicitor (PubMed:29861135).</text>
</comment>
<comment type="disruption phenotype">
    <text evidence="4 5">Slight elongation of leaf petioles (PubMed:26160044). Increased length of primary roots in seedlings (PubMed:29861135).</text>
</comment>
<comment type="miscellaneous">
    <text evidence="2">Plants overexpressing PRF3 exhibit a dwarf phenotype with delayed seed germination, reduced lengths of roots and hypocotyls, and inhibition of hypocotyl cell elongation due to F-actin rearrangement.</text>
</comment>
<comment type="similarity">
    <text evidence="10">Belongs to the profilin family.</text>
</comment>
<comment type="sequence caution" evidence="10">
    <conflict type="erroneous initiation">
        <sequence resource="EMBL-CDS" id="AAG10089"/>
    </conflict>
    <text>Truncated N-terminus.</text>
</comment>
<comment type="sequence caution" evidence="10">
    <conflict type="erroneous initiation">
        <sequence resource="EMBL-CDS" id="AAM60876"/>
    </conflict>
    <text>Truncated N-terminus.</text>
</comment>
<comment type="sequence caution" evidence="10">
    <conflict type="erroneous initiation">
        <sequence resource="EMBL-CDS" id="AED96785"/>
    </conflict>
    <text>Truncated N-terminus.</text>
</comment>
<comment type="sequence caution" evidence="10">
    <conflict type="erroneous initiation">
        <sequence resource="EMBL-CDS" id="AED96786"/>
    </conflict>
    <text>Truncated N-terminus.</text>
</comment>
<comment type="sequence caution" evidence="10">
    <conflict type="erroneous initiation">
        <sequence resource="EMBL-CDS" id="BAB09877"/>
    </conflict>
    <text>Truncated N-terminus.</text>
</comment>
<comment type="sequence caution" evidence="10">
    <conflict type="erroneous initiation">
        <sequence resource="EMBL-CDS" id="BAH57069"/>
    </conflict>
    <text>Truncated N-terminus.</text>
</comment>
<evidence type="ECO:0000256" key="1">
    <source>
        <dbReference type="SAM" id="MobiDB-lite"/>
    </source>
</evidence>
<evidence type="ECO:0000269" key="2">
    <source>
    </source>
</evidence>
<evidence type="ECO:0000269" key="3">
    <source>
    </source>
</evidence>
<evidence type="ECO:0000269" key="4">
    <source>
    </source>
</evidence>
<evidence type="ECO:0000269" key="5">
    <source>
    </source>
</evidence>
<evidence type="ECO:0000303" key="6">
    <source>
    </source>
</evidence>
<evidence type="ECO:0000303" key="7">
    <source>
    </source>
</evidence>
<evidence type="ECO:0000303" key="8">
    <source>
    </source>
</evidence>
<evidence type="ECO:0000303" key="9">
    <source>
    </source>
</evidence>
<evidence type="ECO:0000305" key="10"/>
<evidence type="ECO:0000305" key="11">
    <source>
    </source>
</evidence>
<evidence type="ECO:0000312" key="12">
    <source>
        <dbReference type="Araport" id="AT5G56600"/>
    </source>
</evidence>
<evidence type="ECO:0000312" key="13">
    <source>
        <dbReference type="EMBL" id="BAB09877.1"/>
    </source>
</evidence>
<evidence type="ECO:0007829" key="14">
    <source>
        <dbReference type="PDB" id="6IQF"/>
    </source>
</evidence>
<feature type="chain" id="PRO_0000199619" description="Profilin-3">
    <location>
        <begin position="1"/>
        <end position="168"/>
    </location>
</feature>
<feature type="region of interest" description="Disordered" evidence="1">
    <location>
        <begin position="14"/>
        <end position="36"/>
    </location>
</feature>
<feature type="compositionally biased region" description="Basic residues" evidence="1">
    <location>
        <begin position="24"/>
        <end position="36"/>
    </location>
</feature>
<feature type="splice variant" id="VSP_042421" description="In isoform 2." evidence="6">
    <original>GAGGVTIKKTTLALVFGIYDEPMTPGQCNMVVENLGEYLIESG</original>
    <variation>VTRLFEYCLIFDELLLILLP</variation>
    <location>
        <begin position="125"/>
        <end position="167"/>
    </location>
</feature>
<feature type="mutagenesis site" description="Increases binding to G-actin; increases protein thermostability." evidence="2 5">
    <location>
        <begin position="1"/>
        <end position="37"/>
    </location>
</feature>
<feature type="helix" evidence="14">
    <location>
        <begin position="40"/>
        <end position="47"/>
    </location>
</feature>
<feature type="strand" evidence="14">
    <location>
        <begin position="58"/>
        <end position="64"/>
    </location>
</feature>
<feature type="strand" evidence="14">
    <location>
        <begin position="69"/>
        <end position="72"/>
    </location>
</feature>
<feature type="helix" evidence="14">
    <location>
        <begin position="81"/>
        <end position="92"/>
    </location>
</feature>
<feature type="turn" evidence="14">
    <location>
        <begin position="98"/>
        <end position="100"/>
    </location>
</feature>
<feature type="strand" evidence="14">
    <location>
        <begin position="102"/>
        <end position="104"/>
    </location>
</feature>
<feature type="strand" evidence="14">
    <location>
        <begin position="107"/>
        <end position="115"/>
    </location>
</feature>
<feature type="turn" evidence="14">
    <location>
        <begin position="116"/>
        <end position="118"/>
    </location>
</feature>
<feature type="strand" evidence="14">
    <location>
        <begin position="119"/>
        <end position="124"/>
    </location>
</feature>
<feature type="strand" evidence="14">
    <location>
        <begin position="127"/>
        <end position="133"/>
    </location>
</feature>
<feature type="strand" evidence="14">
    <location>
        <begin position="135"/>
        <end position="143"/>
    </location>
</feature>
<feature type="helix" evidence="14">
    <location>
        <begin position="149"/>
        <end position="165"/>
    </location>
</feature>
<reference key="1">
    <citation type="journal article" date="1998" name="DNA Res.">
        <title>Structural analysis of Arabidopsis thaliana chromosome 5. VI. Sequence features of the regions of 1,367,185 bp covered by 19 physically assigned P1 and TAC clones.</title>
        <authorList>
            <person name="Kotani H."/>
            <person name="Nakamura Y."/>
            <person name="Sato S."/>
            <person name="Asamizu E."/>
            <person name="Kaneko T."/>
            <person name="Miyajima N."/>
            <person name="Tabata S."/>
        </authorList>
    </citation>
    <scope>NUCLEOTIDE SEQUENCE [LARGE SCALE GENOMIC DNA]</scope>
    <source>
        <strain>cv. Columbia</strain>
    </source>
</reference>
<reference key="2">
    <citation type="journal article" date="2017" name="Plant J.">
        <title>Araport11: a complete reannotation of the Arabidopsis thaliana reference genome.</title>
        <authorList>
            <person name="Cheng C.Y."/>
            <person name="Krishnakumar V."/>
            <person name="Chan A.P."/>
            <person name="Thibaud-Nissen F."/>
            <person name="Schobel S."/>
            <person name="Town C.D."/>
        </authorList>
    </citation>
    <scope>GENOME REANNOTATION</scope>
    <source>
        <strain>cv. Columbia</strain>
    </source>
</reference>
<reference key="3">
    <citation type="journal article" date="2003" name="Science">
        <title>Empirical analysis of transcriptional activity in the Arabidopsis genome.</title>
        <authorList>
            <person name="Yamada K."/>
            <person name="Lim J."/>
            <person name="Dale J.M."/>
            <person name="Chen H."/>
            <person name="Shinn P."/>
            <person name="Palm C.J."/>
            <person name="Southwick A.M."/>
            <person name="Wu H.C."/>
            <person name="Kim C.J."/>
            <person name="Nguyen M."/>
            <person name="Pham P.K."/>
            <person name="Cheuk R.F."/>
            <person name="Karlin-Newmann G."/>
            <person name="Liu S.X."/>
            <person name="Lam B."/>
            <person name="Sakano H."/>
            <person name="Wu T."/>
            <person name="Yu G."/>
            <person name="Miranda M."/>
            <person name="Quach H.L."/>
            <person name="Tripp M."/>
            <person name="Chang C.H."/>
            <person name="Lee J.M."/>
            <person name="Toriumi M.J."/>
            <person name="Chan M.M."/>
            <person name="Tang C.C."/>
            <person name="Onodera C.S."/>
            <person name="Deng J.M."/>
            <person name="Akiyama K."/>
            <person name="Ansari Y."/>
            <person name="Arakawa T."/>
            <person name="Banh J."/>
            <person name="Banno F."/>
            <person name="Bowser L."/>
            <person name="Brooks S.Y."/>
            <person name="Carninci P."/>
            <person name="Chao Q."/>
            <person name="Choy N."/>
            <person name="Enju A."/>
            <person name="Goldsmith A.D."/>
            <person name="Gurjal M."/>
            <person name="Hansen N.F."/>
            <person name="Hayashizaki Y."/>
            <person name="Johnson-Hopson C."/>
            <person name="Hsuan V.W."/>
            <person name="Iida K."/>
            <person name="Karnes M."/>
            <person name="Khan S."/>
            <person name="Koesema E."/>
            <person name="Ishida J."/>
            <person name="Jiang P.X."/>
            <person name="Jones T."/>
            <person name="Kawai J."/>
            <person name="Kamiya A."/>
            <person name="Meyers C."/>
            <person name="Nakajima M."/>
            <person name="Narusaka M."/>
            <person name="Seki M."/>
            <person name="Sakurai T."/>
            <person name="Satou M."/>
            <person name="Tamse R."/>
            <person name="Vaysberg M."/>
            <person name="Wallender E.K."/>
            <person name="Wong C."/>
            <person name="Yamamura Y."/>
            <person name="Yuan S."/>
            <person name="Shinozaki K."/>
            <person name="Davis R.W."/>
            <person name="Theologis A."/>
            <person name="Ecker J.R."/>
        </authorList>
    </citation>
    <scope>NUCLEOTIDE SEQUENCE [LARGE SCALE MRNA] (ISOFORM 1)</scope>
    <source>
        <strain>cv. Columbia</strain>
    </source>
</reference>
<reference key="4">
    <citation type="submission" date="2002-03" db="EMBL/GenBank/DDBJ databases">
        <title>Full-length cDNA from Arabidopsis thaliana.</title>
        <authorList>
            <person name="Brover V.V."/>
            <person name="Troukhan M.E."/>
            <person name="Alexandrov N.A."/>
            <person name="Lu Y.-P."/>
            <person name="Flavell R.B."/>
            <person name="Feldmann K.A."/>
        </authorList>
    </citation>
    <scope>NUCLEOTIDE SEQUENCE [LARGE SCALE MRNA] OF 6-168 (ISOFORM 1)</scope>
</reference>
<reference key="5">
    <citation type="journal article" date="2009" name="DNA Res.">
        <title>Analysis of multiple occurrences of alternative splicing events in Arabidopsis thaliana using novel sequenced full-length cDNAs.</title>
        <authorList>
            <person name="Iida K."/>
            <person name="Fukami-Kobayashi K."/>
            <person name="Toyoda A."/>
            <person name="Sakaki Y."/>
            <person name="Kobayashi M."/>
            <person name="Seki M."/>
            <person name="Shinozaki K."/>
        </authorList>
    </citation>
    <scope>NUCLEOTIDE SEQUENCE [LARGE SCALE MRNA] OF 16-168 (ISOFORM 2)</scope>
    <source>
        <strain>cv. Columbia</strain>
    </source>
</reference>
<reference key="6">
    <citation type="journal article" date="1996" name="Plant Physiol.">
        <title>The Arabidopsis profilin gene family. Evidence for an ancient split between constitutive and pollen-specific profilin genes.</title>
        <authorList>
            <person name="Huang S."/>
            <person name="McDowell J.M."/>
            <person name="Weise M.J."/>
            <person name="Meagher R.B."/>
        </authorList>
    </citation>
    <scope>NUCLEOTIDE SEQUENCE [MRNA] OF 25-168</scope>
    <source>
        <strain>cv. Columbia</strain>
        <tissue>Flower</tissue>
    </source>
</reference>
<reference key="7">
    <citation type="journal article" date="2013" name="Plant Cell Rep.">
        <title>Overexpression of profilin 3 affects cell elongation and F-actin organization in Arabidopsis thaliana.</title>
        <authorList>
            <person name="Fan T."/>
            <person name="Zhai H."/>
            <person name="Shi W."/>
            <person name="Wang J."/>
            <person name="Jia H."/>
            <person name="Xiang Y."/>
            <person name="An L."/>
        </authorList>
    </citation>
    <scope>FUNCTION</scope>
    <scope>TISSUE SPECIFICITY</scope>
    <scope>MUTAGENESIS OF 1-MET--ASN-37</scope>
</reference>
<reference key="8">
    <citation type="journal article" date="2015" name="BMC Plant Biol.">
        <title>Arabidopsis plants deficient in constitutive class profilins reveal independent and quantitative genetic effects.</title>
        <authorList>
            <person name="Muessar K.J."/>
            <person name="Kandasamy M.K."/>
            <person name="McKinney E.C."/>
            <person name="Meagher R.B."/>
        </authorList>
    </citation>
    <scope>DISRUPTION PHENOTYPE</scope>
</reference>
<reference key="9">
    <citation type="journal article" date="2015" name="Sci. Rep.">
        <title>Hydrogen sulfide modulates actin-dependent auxin transport via regulating ABPs results in changing of root development in Arabidopsis.</title>
        <authorList>
            <person name="Jia H."/>
            <person name="Hu Y."/>
            <person name="Fan T."/>
            <person name="Li J."/>
        </authorList>
    </citation>
    <scope>FUNCTION</scope>
    <scope>INDUCTION BY HYDROGEN SULFIDE</scope>
</reference>
<reference key="10">
    <citation type="journal article" date="2018" name="Curr. Biol.">
        <title>Profilin negatively regulates formin-mediated actin assembly to modulate PAMP-triggered plant immunity.</title>
        <authorList>
            <person name="Sun H."/>
            <person name="Qiao Z."/>
            <person name="Chua K.P."/>
            <person name="Tursic A."/>
            <person name="Liu X."/>
            <person name="Gao Y.G."/>
            <person name="Mu Y."/>
            <person name="Hou X."/>
            <person name="Miao Y."/>
        </authorList>
    </citation>
    <scope>FUNCTION</scope>
    <scope>SUBUNIT</scope>
    <scope>INDUCTION</scope>
    <scope>DISRUPTION PHENOTYPE</scope>
    <scope>MUTAGENESIS OF 1-MET--ASN-37</scope>
</reference>